<accession>Q9VAW5</accession>
<accession>A4V3J4</accession>
<accession>D0IQE9</accession>
<accession>E1JJ02</accession>
<accession>Q8IMM4</accession>
<accession>Q8MSZ4</accession>
<accession>Q8MYR3</accession>
<accession>Q9NHN6</accession>
<accession>Q9VAW4</accession>
<evidence type="ECO:0000255" key="1">
    <source>
        <dbReference type="PROSITE-ProRule" id="PRU00332"/>
    </source>
</evidence>
<evidence type="ECO:0000256" key="2">
    <source>
        <dbReference type="SAM" id="MobiDB-lite"/>
    </source>
</evidence>
<evidence type="ECO:0000269" key="3">
    <source>
    </source>
</evidence>
<evidence type="ECO:0000269" key="4">
    <source>
    </source>
</evidence>
<evidence type="ECO:0000269" key="5">
    <source>
    </source>
</evidence>
<evidence type="ECO:0000269" key="6">
    <source>
    </source>
</evidence>
<evidence type="ECO:0000269" key="7">
    <source>
    </source>
</evidence>
<evidence type="ECO:0000269" key="8">
    <source>
    </source>
</evidence>
<evidence type="ECO:0000269" key="9">
    <source>
    </source>
</evidence>
<evidence type="ECO:0000269" key="10">
    <source>
    </source>
</evidence>
<evidence type="ECO:0000303" key="11">
    <source>
    </source>
</evidence>
<evidence type="ECO:0000303" key="12">
    <source>
    </source>
</evidence>
<evidence type="ECO:0000305" key="13"/>
<evidence type="ECO:0007829" key="14">
    <source>
        <dbReference type="PDB" id="8DHU"/>
    </source>
</evidence>
<protein>
    <recommendedName>
        <fullName>La-related protein 1</fullName>
    </recommendedName>
    <alternativeName>
        <fullName>dLarp</fullName>
    </alternativeName>
</protein>
<proteinExistence type="evidence at protein level"/>
<gene>
    <name type="primary">larp</name>
    <name type="ORF">CG42551</name>
</gene>
<dbReference type="EMBL" id="AF221108">
    <property type="protein sequence ID" value="AAF35862.1"/>
    <property type="status" value="ALT_SEQ"/>
    <property type="molecule type" value="mRNA"/>
</dbReference>
<dbReference type="EMBL" id="AE014297">
    <property type="protein sequence ID" value="AAF56783.3"/>
    <property type="molecule type" value="Genomic_DNA"/>
</dbReference>
<dbReference type="EMBL" id="AE014297">
    <property type="protein sequence ID" value="AAN14138.5"/>
    <property type="molecule type" value="Genomic_DNA"/>
</dbReference>
<dbReference type="EMBL" id="AE014297">
    <property type="protein sequence ID" value="AAN14139.1"/>
    <property type="molecule type" value="Genomic_DNA"/>
</dbReference>
<dbReference type="EMBL" id="AE014297">
    <property type="protein sequence ID" value="ACZ95051.1"/>
    <property type="molecule type" value="Genomic_DNA"/>
</dbReference>
<dbReference type="EMBL" id="AY113653">
    <property type="protein sequence ID" value="AAM29658.1"/>
    <property type="status" value="ALT_SEQ"/>
    <property type="molecule type" value="mRNA"/>
</dbReference>
<dbReference type="EMBL" id="AY118468">
    <property type="protein sequence ID" value="AAM49837.1"/>
    <property type="status" value="ALT_INIT"/>
    <property type="molecule type" value="mRNA"/>
</dbReference>
<dbReference type="EMBL" id="BT100187">
    <property type="protein sequence ID" value="ACY39986.1"/>
    <property type="molecule type" value="mRNA"/>
</dbReference>
<dbReference type="RefSeq" id="NP_001163757.1">
    <molecule id="Q9VAW5-2"/>
    <property type="nucleotide sequence ID" value="NM_001170286.3"/>
</dbReference>
<dbReference type="RefSeq" id="NP_001247347.1">
    <molecule id="Q9VAW5-3"/>
    <property type="nucleotide sequence ID" value="NM_001260418.2"/>
</dbReference>
<dbReference type="RefSeq" id="NP_001247348.1">
    <molecule id="Q9VAW5-3"/>
    <property type="nucleotide sequence ID" value="NM_001260419.2"/>
</dbReference>
<dbReference type="RefSeq" id="NP_524998.1">
    <molecule id="Q9VAW5-2"/>
    <property type="nucleotide sequence ID" value="NM_080259.3"/>
</dbReference>
<dbReference type="RefSeq" id="NP_733244.5">
    <molecule id="Q9VAW5-3"/>
    <property type="nucleotide sequence ID" value="NM_170365.4"/>
</dbReference>
<dbReference type="RefSeq" id="NP_733245.1">
    <molecule id="Q9VAW5-2"/>
    <property type="nucleotide sequence ID" value="NM_170366.4"/>
</dbReference>
<dbReference type="PDB" id="8DHU">
    <property type="method" value="X-ray"/>
    <property type="resolution" value="2.29 A"/>
    <property type="chains" value="A/B=1330-1481"/>
</dbReference>
<dbReference type="PDBsum" id="8DHU"/>
<dbReference type="SMR" id="Q9VAW5"/>
<dbReference type="BioGRID" id="72798">
    <property type="interactions" value="35"/>
</dbReference>
<dbReference type="FunCoup" id="Q9VAW5">
    <property type="interactions" value="610"/>
</dbReference>
<dbReference type="IntAct" id="Q9VAW5">
    <property type="interactions" value="69"/>
</dbReference>
<dbReference type="MINT" id="Q9VAW5"/>
<dbReference type="STRING" id="7227.FBpp0290398"/>
<dbReference type="GlyGen" id="Q9VAW5">
    <property type="glycosylation" value="4 sites"/>
</dbReference>
<dbReference type="iPTMnet" id="Q9VAW5"/>
<dbReference type="PaxDb" id="7227-FBpp0290398"/>
<dbReference type="DNASU" id="53567"/>
<dbReference type="EnsemblMetazoa" id="FBtr0089680">
    <molecule id="Q9VAW5-2"/>
    <property type="protein sequence ID" value="FBpp0088622"/>
    <property type="gene ID" value="FBgn0261618"/>
</dbReference>
<dbReference type="EnsemblMetazoa" id="FBtr0089682">
    <molecule id="Q9VAW5-2"/>
    <property type="protein sequence ID" value="FBpp0088624"/>
    <property type="gene ID" value="FBgn0261618"/>
</dbReference>
<dbReference type="EnsemblMetazoa" id="FBtr0301180">
    <molecule id="Q9VAW5-3"/>
    <property type="protein sequence ID" value="FBpp0290398"/>
    <property type="gene ID" value="FBgn0261618"/>
</dbReference>
<dbReference type="EnsemblMetazoa" id="FBtr0301181">
    <molecule id="Q9VAW5-2"/>
    <property type="protein sequence ID" value="FBpp0290399"/>
    <property type="gene ID" value="FBgn0261618"/>
</dbReference>
<dbReference type="EnsemblMetazoa" id="FBtr0306389">
    <molecule id="Q9VAW5-3"/>
    <property type="protein sequence ID" value="FBpp0297481"/>
    <property type="gene ID" value="FBgn0261618"/>
</dbReference>
<dbReference type="EnsemblMetazoa" id="FBtr0306390">
    <molecule id="Q9VAW5-3"/>
    <property type="protein sequence ID" value="FBpp0297482"/>
    <property type="gene ID" value="FBgn0261618"/>
</dbReference>
<dbReference type="GeneID" id="53567"/>
<dbReference type="KEGG" id="dme:Dmel_CG42551"/>
<dbReference type="UCSC" id="CG14066-RB">
    <property type="organism name" value="d. melanogaster"/>
</dbReference>
<dbReference type="AGR" id="FB:FBgn0261618"/>
<dbReference type="CTD" id="53567"/>
<dbReference type="FlyBase" id="FBgn0261618">
    <property type="gene designation" value="larp"/>
</dbReference>
<dbReference type="VEuPathDB" id="VectorBase:FBgn0261618"/>
<dbReference type="eggNOG" id="KOG2590">
    <property type="taxonomic scope" value="Eukaryota"/>
</dbReference>
<dbReference type="GeneTree" id="ENSGT00940000169209"/>
<dbReference type="InParanoid" id="Q9VAW5"/>
<dbReference type="OMA" id="PTVWPIS"/>
<dbReference type="OrthoDB" id="340227at2759"/>
<dbReference type="PhylomeDB" id="Q9VAW5"/>
<dbReference type="SignaLink" id="Q9VAW5"/>
<dbReference type="BioGRID-ORCS" id="53567">
    <property type="hits" value="0 hits in 3 CRISPR screens"/>
</dbReference>
<dbReference type="ChiTaRS" id="larp">
    <property type="organism name" value="fly"/>
</dbReference>
<dbReference type="GenomeRNAi" id="53567"/>
<dbReference type="PRO" id="PR:Q9VAW5"/>
<dbReference type="Proteomes" id="UP000000803">
    <property type="component" value="Chromosome 3R"/>
</dbReference>
<dbReference type="Bgee" id="FBgn0261618">
    <property type="expression patterns" value="Expressed in fat body cell in male reproductive gland and 297 other cell types or tissues"/>
</dbReference>
<dbReference type="ExpressionAtlas" id="Q9VAW5">
    <property type="expression patterns" value="baseline and differential"/>
</dbReference>
<dbReference type="GO" id="GO:0005737">
    <property type="term" value="C:cytoplasm"/>
    <property type="evidence" value="ECO:0000314"/>
    <property type="project" value="FlyBase"/>
</dbReference>
<dbReference type="GO" id="GO:0010494">
    <property type="term" value="C:cytoplasmic stress granule"/>
    <property type="evidence" value="ECO:0000318"/>
    <property type="project" value="GO_Central"/>
</dbReference>
<dbReference type="GO" id="GO:0005829">
    <property type="term" value="C:cytosol"/>
    <property type="evidence" value="ECO:0000314"/>
    <property type="project" value="FlyBase"/>
</dbReference>
<dbReference type="GO" id="GO:0031315">
    <property type="term" value="C:extrinsic component of mitochondrial outer membrane"/>
    <property type="evidence" value="ECO:0000314"/>
    <property type="project" value="FlyBase"/>
</dbReference>
<dbReference type="GO" id="GO:0048027">
    <property type="term" value="F:mRNA 5'-UTR binding"/>
    <property type="evidence" value="ECO:0000314"/>
    <property type="project" value="FlyBase"/>
</dbReference>
<dbReference type="GO" id="GO:0008187">
    <property type="term" value="F:poly-pyrimidine tract binding"/>
    <property type="evidence" value="ECO:0000314"/>
    <property type="project" value="FlyBase"/>
</dbReference>
<dbReference type="GO" id="GO:0003723">
    <property type="term" value="F:RNA binding"/>
    <property type="evidence" value="ECO:0000318"/>
    <property type="project" value="GO_Central"/>
</dbReference>
<dbReference type="GO" id="GO:0000339">
    <property type="term" value="F:RNA cap binding"/>
    <property type="evidence" value="ECO:0007669"/>
    <property type="project" value="InterPro"/>
</dbReference>
<dbReference type="GO" id="GO:0007140">
    <property type="term" value="P:male meiotic nuclear division"/>
    <property type="evidence" value="ECO:0000315"/>
    <property type="project" value="FlyBase"/>
</dbReference>
<dbReference type="GO" id="GO:0000001">
    <property type="term" value="P:mitochondrion inheritance"/>
    <property type="evidence" value="ECO:0000315"/>
    <property type="project" value="FlyBase"/>
</dbReference>
<dbReference type="GO" id="GO:0048255">
    <property type="term" value="P:mRNA stabilization"/>
    <property type="evidence" value="ECO:0007669"/>
    <property type="project" value="InterPro"/>
</dbReference>
<dbReference type="GO" id="GO:2000766">
    <property type="term" value="P:negative regulation of cytoplasmic translation"/>
    <property type="evidence" value="ECO:0000315"/>
    <property type="project" value="FlyBase"/>
</dbReference>
<dbReference type="GO" id="GO:2000767">
    <property type="term" value="P:positive regulation of cytoplasmic translation"/>
    <property type="evidence" value="ECO:0000315"/>
    <property type="project" value="FlyBase"/>
</dbReference>
<dbReference type="GO" id="GO:0090297">
    <property type="term" value="P:positive regulation of mitochondrial DNA replication"/>
    <property type="evidence" value="ECO:0000315"/>
    <property type="project" value="FlyBase"/>
</dbReference>
<dbReference type="GO" id="GO:1903955">
    <property type="term" value="P:positive regulation of protein targeting to mitochondrion"/>
    <property type="evidence" value="ECO:0000315"/>
    <property type="project" value="FlyBase"/>
</dbReference>
<dbReference type="GO" id="GO:0045727">
    <property type="term" value="P:positive regulation of translation"/>
    <property type="evidence" value="ECO:0000318"/>
    <property type="project" value="GO_Central"/>
</dbReference>
<dbReference type="GO" id="GO:0007053">
    <property type="term" value="P:spindle assembly involved in male meiosis"/>
    <property type="evidence" value="ECO:0000315"/>
    <property type="project" value="FlyBase"/>
</dbReference>
<dbReference type="GO" id="GO:0035186">
    <property type="term" value="P:syncytial blastoderm mitotic cell cycle"/>
    <property type="evidence" value="ECO:0000315"/>
    <property type="project" value="FlyBase"/>
</dbReference>
<dbReference type="CDD" id="cd08034">
    <property type="entry name" value="LARP_1_2"/>
    <property type="match status" value="1"/>
</dbReference>
<dbReference type="FunFam" id="1.10.10.10:FF:000131">
    <property type="entry name" value="la-related protein 1B isoform X2"/>
    <property type="match status" value="1"/>
</dbReference>
<dbReference type="Gene3D" id="1.10.10.10">
    <property type="entry name" value="Winged helix-like DNA-binding domain superfamily/Winged helix DNA-binding domain"/>
    <property type="match status" value="1"/>
</dbReference>
<dbReference type="InterPro" id="IPR006607">
    <property type="entry name" value="DM15"/>
</dbReference>
<dbReference type="InterPro" id="IPR045180">
    <property type="entry name" value="La_dom_prot"/>
</dbReference>
<dbReference type="InterPro" id="IPR006630">
    <property type="entry name" value="La_HTH"/>
</dbReference>
<dbReference type="InterPro" id="IPR036388">
    <property type="entry name" value="WH-like_DNA-bd_sf"/>
</dbReference>
<dbReference type="InterPro" id="IPR036390">
    <property type="entry name" value="WH_DNA-bd_sf"/>
</dbReference>
<dbReference type="PANTHER" id="PTHR22792:SF132">
    <property type="entry name" value="LA-RELATED PROTEIN 1"/>
    <property type="match status" value="1"/>
</dbReference>
<dbReference type="PANTHER" id="PTHR22792">
    <property type="entry name" value="LUPUS LA PROTEIN-RELATED"/>
    <property type="match status" value="1"/>
</dbReference>
<dbReference type="Pfam" id="PF05383">
    <property type="entry name" value="La"/>
    <property type="match status" value="1"/>
</dbReference>
<dbReference type="Pfam" id="PF21071">
    <property type="entry name" value="LARP1_HEAT"/>
    <property type="match status" value="1"/>
</dbReference>
<dbReference type="SMART" id="SM00684">
    <property type="entry name" value="DM15"/>
    <property type="match status" value="3"/>
</dbReference>
<dbReference type="SMART" id="SM00715">
    <property type="entry name" value="LA"/>
    <property type="match status" value="1"/>
</dbReference>
<dbReference type="SUPFAM" id="SSF46785">
    <property type="entry name" value="Winged helix' DNA-binding domain"/>
    <property type="match status" value="1"/>
</dbReference>
<dbReference type="PROSITE" id="PS50961">
    <property type="entry name" value="HTH_LA"/>
    <property type="match status" value="1"/>
</dbReference>
<keyword id="KW-0002">3D-structure</keyword>
<keyword id="KW-0025">Alternative splicing</keyword>
<keyword id="KW-0963">Cytoplasm</keyword>
<keyword id="KW-0469">Meiosis</keyword>
<keyword id="KW-0496">Mitochondrion</keyword>
<keyword id="KW-0597">Phosphoprotein</keyword>
<keyword id="KW-1185">Reference proteome</keyword>
<keyword id="KW-0694">RNA-binding</keyword>
<comment type="function">
    <text evidence="6 8 9 10">RNA-binding protein that regulates the translation of specific target mRNA species downstream of the mTORC1 complex, in function of growth signals and nutrient availability. Interacts on the one hand with the 3' poly-A tails that are present in all mRNA molecules, and on the other hand with the 7-methylguanosine cap structure of mRNAs containing a 5' terminal oligopyrimidine (5'TOP) motif, which is present in mRNAs encoding ribosomal proteins and several components of the translation machinery (PubMed:17951964, PubMed:19631203, PubMed:30772175, PubMed:35413237). The interaction with the 5' end of mRNAs containing a 5'TOP motif leads to translational repression. Associates with actively translating ribosomes and stimulates translation of mRNAs containing a 5'TOP motif, thereby regulating protein synthesis, and as a consequence, cell growth and proliferation (PubMed:35413237).</text>
</comment>
<comment type="subunit">
    <text evidence="8">Interacts with pAbp.</text>
</comment>
<comment type="subcellular location">
    <subcellularLocation>
        <location evidence="9">Mitochondrion</location>
    </subcellularLocation>
    <subcellularLocation>
        <location evidence="3 4 6">Cytoplasm</location>
        <location evidence="3 4 6">Cytosol</location>
    </subcellularLocation>
</comment>
<comment type="alternative products">
    <event type="alternative splicing"/>
    <isoform>
        <id>Q9VAW5-3</id>
        <name>D</name>
        <sequence type="displayed"/>
    </isoform>
    <isoform>
        <id>Q9VAW5-1</id>
        <name>C</name>
        <sequence type="described" ref="VSP_041775 VSP_041776"/>
    </isoform>
    <isoform>
        <id>Q9VAW5-2</id>
        <name>A</name>
        <name>B</name>
        <name>E</name>
        <sequence type="described" ref="VSP_015117"/>
    </isoform>
</comment>
<comment type="developmental stage">
    <text evidence="3">At the end of embryogenesis, accumulates in the gut and muscles.</text>
</comment>
<comment type="PTM">
    <text evidence="9">Phosphorylated on threonine and serine residues (PubMed:30772175). During oogenesis, phosphorylation on Ser-1119 by Pink1 at the outer membrane of defective mitochondria, impairs its ability to promote local translation and mtDNA replication thus reducing transmission of deleterious mtDNA mutations to the mature oocyte (PubMed:30772175).</text>
</comment>
<comment type="disruption phenotype">
    <text evidence="6 8">Mutant males show multiple meiotic phenotypes such as a failure of chromosome segregation, cytokinesis and mitochondrial partition. Defects in spindle pole organization and spindle formation. Mutant-derived syncytial embryos show a range of mitotic phenotypes, including failure of centrosomes to migrate around the nuclear envelope, detachment of centrosomes from spindle poles, the formation of multipolar spindle arrays and cytokinetic defects.</text>
</comment>
<comment type="sequence caution" evidence="13">
    <conflict type="miscellaneous discrepancy">
        <sequence resource="EMBL-CDS" id="AAF35862"/>
    </conflict>
    <text>Unusual initiator. The initiator methionine is coded by a non-canonical ATA isoleucine codon.</text>
</comment>
<comment type="sequence caution" evidence="13">
    <conflict type="erroneous initiation">
        <sequence resource="EMBL-CDS" id="AAM29658"/>
    </conflict>
    <text>Truncated N-terminus.</text>
</comment>
<comment type="sequence caution" evidence="13">
    <conflict type="miscellaneous discrepancy">
        <sequence resource="EMBL-CDS" id="AAM29658"/>
    </conflict>
    <text>Unusual initiator. The initiator methionine is coded by a non-canonical ATA isoleucine codon.</text>
</comment>
<comment type="sequence caution" evidence="13">
    <conflict type="miscellaneous discrepancy">
        <sequence resource="EMBL-CDS" id="AAM29658"/>
    </conflict>
    <text>Contaminating sequence. Potential poly-A sequence.</text>
</comment>
<comment type="sequence caution" evidence="13">
    <conflict type="erroneous initiation">
        <sequence resource="EMBL-CDS" id="AAM49837"/>
    </conflict>
    <text>Truncated N-terminus.</text>
</comment>
<reference key="1">
    <citation type="journal article" date="2000" name="Dev. Dyn.">
        <title>dlarp, a new candidate Hox target in Drosophila whose orthologue in mouse is expressed at sites of epithelium/mesenchymal interactions.</title>
        <authorList>
            <person name="Chauvet S."/>
            <person name="Maurel-Zaffran C."/>
            <person name="Miassod R."/>
            <person name="Jullien N."/>
            <person name="Pradel J."/>
            <person name="Aragnol D."/>
        </authorList>
    </citation>
    <scope>NUCLEOTIDE SEQUENCE [MRNA] (ISOFORM C)</scope>
    <scope>DEVELOPMENTAL STAGE</scope>
    <scope>SUBCELLULAR LOCATION</scope>
    <scope>INITIATION CODON ATA</scope>
</reference>
<reference key="2">
    <citation type="journal article" date="2000" name="Science">
        <title>The genome sequence of Drosophila melanogaster.</title>
        <authorList>
            <person name="Adams M.D."/>
            <person name="Celniker S.E."/>
            <person name="Holt R.A."/>
            <person name="Evans C.A."/>
            <person name="Gocayne J.D."/>
            <person name="Amanatides P.G."/>
            <person name="Scherer S.E."/>
            <person name="Li P.W."/>
            <person name="Hoskins R.A."/>
            <person name="Galle R.F."/>
            <person name="George R.A."/>
            <person name="Lewis S.E."/>
            <person name="Richards S."/>
            <person name="Ashburner M."/>
            <person name="Henderson S.N."/>
            <person name="Sutton G.G."/>
            <person name="Wortman J.R."/>
            <person name="Yandell M.D."/>
            <person name="Zhang Q."/>
            <person name="Chen L.X."/>
            <person name="Brandon R.C."/>
            <person name="Rogers Y.-H.C."/>
            <person name="Blazej R.G."/>
            <person name="Champe M."/>
            <person name="Pfeiffer B.D."/>
            <person name="Wan K.H."/>
            <person name="Doyle C."/>
            <person name="Baxter E.G."/>
            <person name="Helt G."/>
            <person name="Nelson C.R."/>
            <person name="Miklos G.L.G."/>
            <person name="Abril J.F."/>
            <person name="Agbayani A."/>
            <person name="An H.-J."/>
            <person name="Andrews-Pfannkoch C."/>
            <person name="Baldwin D."/>
            <person name="Ballew R.M."/>
            <person name="Basu A."/>
            <person name="Baxendale J."/>
            <person name="Bayraktaroglu L."/>
            <person name="Beasley E.M."/>
            <person name="Beeson K.Y."/>
            <person name="Benos P.V."/>
            <person name="Berman B.P."/>
            <person name="Bhandari D."/>
            <person name="Bolshakov S."/>
            <person name="Borkova D."/>
            <person name="Botchan M.R."/>
            <person name="Bouck J."/>
            <person name="Brokstein P."/>
            <person name="Brottier P."/>
            <person name="Burtis K.C."/>
            <person name="Busam D.A."/>
            <person name="Butler H."/>
            <person name="Cadieu E."/>
            <person name="Center A."/>
            <person name="Chandra I."/>
            <person name="Cherry J.M."/>
            <person name="Cawley S."/>
            <person name="Dahlke C."/>
            <person name="Davenport L.B."/>
            <person name="Davies P."/>
            <person name="de Pablos B."/>
            <person name="Delcher A."/>
            <person name="Deng Z."/>
            <person name="Mays A.D."/>
            <person name="Dew I."/>
            <person name="Dietz S.M."/>
            <person name="Dodson K."/>
            <person name="Doup L.E."/>
            <person name="Downes M."/>
            <person name="Dugan-Rocha S."/>
            <person name="Dunkov B.C."/>
            <person name="Dunn P."/>
            <person name="Durbin K.J."/>
            <person name="Evangelista C.C."/>
            <person name="Ferraz C."/>
            <person name="Ferriera S."/>
            <person name="Fleischmann W."/>
            <person name="Fosler C."/>
            <person name="Gabrielian A.E."/>
            <person name="Garg N.S."/>
            <person name="Gelbart W.M."/>
            <person name="Glasser K."/>
            <person name="Glodek A."/>
            <person name="Gong F."/>
            <person name="Gorrell J.H."/>
            <person name="Gu Z."/>
            <person name="Guan P."/>
            <person name="Harris M."/>
            <person name="Harris N.L."/>
            <person name="Harvey D.A."/>
            <person name="Heiman T.J."/>
            <person name="Hernandez J.R."/>
            <person name="Houck J."/>
            <person name="Hostin D."/>
            <person name="Houston K.A."/>
            <person name="Howland T.J."/>
            <person name="Wei M.-H."/>
            <person name="Ibegwam C."/>
            <person name="Jalali M."/>
            <person name="Kalush F."/>
            <person name="Karpen G.H."/>
            <person name="Ke Z."/>
            <person name="Kennison J.A."/>
            <person name="Ketchum K.A."/>
            <person name="Kimmel B.E."/>
            <person name="Kodira C.D."/>
            <person name="Kraft C.L."/>
            <person name="Kravitz S."/>
            <person name="Kulp D."/>
            <person name="Lai Z."/>
            <person name="Lasko P."/>
            <person name="Lei Y."/>
            <person name="Levitsky A.A."/>
            <person name="Li J.H."/>
            <person name="Li Z."/>
            <person name="Liang Y."/>
            <person name="Lin X."/>
            <person name="Liu X."/>
            <person name="Mattei B."/>
            <person name="McIntosh T.C."/>
            <person name="McLeod M.P."/>
            <person name="McPherson D."/>
            <person name="Merkulov G."/>
            <person name="Milshina N.V."/>
            <person name="Mobarry C."/>
            <person name="Morris J."/>
            <person name="Moshrefi A."/>
            <person name="Mount S.M."/>
            <person name="Moy M."/>
            <person name="Murphy B."/>
            <person name="Murphy L."/>
            <person name="Muzny D.M."/>
            <person name="Nelson D.L."/>
            <person name="Nelson D.R."/>
            <person name="Nelson K.A."/>
            <person name="Nixon K."/>
            <person name="Nusskern D.R."/>
            <person name="Pacleb J.M."/>
            <person name="Palazzolo M."/>
            <person name="Pittman G.S."/>
            <person name="Pan S."/>
            <person name="Pollard J."/>
            <person name="Puri V."/>
            <person name="Reese M.G."/>
            <person name="Reinert K."/>
            <person name="Remington K."/>
            <person name="Saunders R.D.C."/>
            <person name="Scheeler F."/>
            <person name="Shen H."/>
            <person name="Shue B.C."/>
            <person name="Siden-Kiamos I."/>
            <person name="Simpson M."/>
            <person name="Skupski M.P."/>
            <person name="Smith T.J."/>
            <person name="Spier E."/>
            <person name="Spradling A.C."/>
            <person name="Stapleton M."/>
            <person name="Strong R."/>
            <person name="Sun E."/>
            <person name="Svirskas R."/>
            <person name="Tector C."/>
            <person name="Turner R."/>
            <person name="Venter E."/>
            <person name="Wang A.H."/>
            <person name="Wang X."/>
            <person name="Wang Z.-Y."/>
            <person name="Wassarman D.A."/>
            <person name="Weinstock G.M."/>
            <person name="Weissenbach J."/>
            <person name="Williams S.M."/>
            <person name="Woodage T."/>
            <person name="Worley K.C."/>
            <person name="Wu D."/>
            <person name="Yang S."/>
            <person name="Yao Q.A."/>
            <person name="Ye J."/>
            <person name="Yeh R.-F."/>
            <person name="Zaveri J.S."/>
            <person name="Zhan M."/>
            <person name="Zhang G."/>
            <person name="Zhao Q."/>
            <person name="Zheng L."/>
            <person name="Zheng X.H."/>
            <person name="Zhong F.N."/>
            <person name="Zhong W."/>
            <person name="Zhou X."/>
            <person name="Zhu S.C."/>
            <person name="Zhu X."/>
            <person name="Smith H.O."/>
            <person name="Gibbs R.A."/>
            <person name="Myers E.W."/>
            <person name="Rubin G.M."/>
            <person name="Venter J.C."/>
        </authorList>
    </citation>
    <scope>NUCLEOTIDE SEQUENCE [LARGE SCALE GENOMIC DNA]</scope>
    <source>
        <strain>Berkeley</strain>
    </source>
</reference>
<reference key="3">
    <citation type="journal article" date="2002" name="Genome Biol.">
        <title>Annotation of the Drosophila melanogaster euchromatic genome: a systematic review.</title>
        <authorList>
            <person name="Misra S."/>
            <person name="Crosby M.A."/>
            <person name="Mungall C.J."/>
            <person name="Matthews B.B."/>
            <person name="Campbell K.S."/>
            <person name="Hradecky P."/>
            <person name="Huang Y."/>
            <person name="Kaminker J.S."/>
            <person name="Millburn G.H."/>
            <person name="Prochnik S.E."/>
            <person name="Smith C.D."/>
            <person name="Tupy J.L."/>
            <person name="Whitfield E.J."/>
            <person name="Bayraktaroglu L."/>
            <person name="Berman B.P."/>
            <person name="Bettencourt B.R."/>
            <person name="Celniker S.E."/>
            <person name="de Grey A.D.N.J."/>
            <person name="Drysdale R.A."/>
            <person name="Harris N.L."/>
            <person name="Richter J."/>
            <person name="Russo S."/>
            <person name="Schroeder A.J."/>
            <person name="Shu S.Q."/>
            <person name="Stapleton M."/>
            <person name="Yamada C."/>
            <person name="Ashburner M."/>
            <person name="Gelbart W.M."/>
            <person name="Rubin G.M."/>
            <person name="Lewis S.E."/>
        </authorList>
    </citation>
    <scope>GENOME REANNOTATION</scope>
    <scope>ALTERNATIVE SPLICING</scope>
    <source>
        <strain>Berkeley</strain>
    </source>
</reference>
<reference key="4">
    <citation type="journal article" date="2002" name="Genome Biol.">
        <title>A Drosophila full-length cDNA resource.</title>
        <authorList>
            <person name="Stapleton M."/>
            <person name="Carlson J.W."/>
            <person name="Brokstein P."/>
            <person name="Yu C."/>
            <person name="Champe M."/>
            <person name="George R.A."/>
            <person name="Guarin H."/>
            <person name="Kronmiller B."/>
            <person name="Pacleb J.M."/>
            <person name="Park S."/>
            <person name="Wan K.H."/>
            <person name="Rubin G.M."/>
            <person name="Celniker S.E."/>
        </authorList>
    </citation>
    <scope>NUCLEOTIDE SEQUENCE [LARGE SCALE MRNA] (ISOFORM C)</scope>
    <scope>NUCLEOTIDE SEQUENCE [LARGE SCALE MRNA] OF 952-1673 (ISOFORMS A/C/D)</scope>
    <source>
        <strain>Berkeley</strain>
        <tissue>Embryo</tissue>
        <tissue>Ovary</tissue>
    </source>
</reference>
<reference key="5">
    <citation type="submission" date="2009-10" db="EMBL/GenBank/DDBJ databases">
        <authorList>
            <person name="Carlson J."/>
            <person name="Booth B."/>
            <person name="Frise E."/>
            <person name="Sandler J."/>
            <person name="Wan K."/>
            <person name="Yu C."/>
            <person name="Celniker S."/>
        </authorList>
    </citation>
    <scope>NUCLEOTIDE SEQUENCE [LARGE SCALE MRNA] OF 1-356 (ISOFORM D)</scope>
</reference>
<reference key="6">
    <citation type="journal article" date="2003" name="Genetics">
        <title>Green fluorescent protein tagging Drosophila proteins at their native genomic loci with small P elements.</title>
        <authorList>
            <person name="Clyne P.J."/>
            <person name="Brotman J.S."/>
            <person name="Sweeney S.T."/>
            <person name="Davis G."/>
        </authorList>
    </citation>
    <scope>SUBCELLULAR LOCATION</scope>
</reference>
<reference key="7">
    <citation type="journal article" date="2007" name="Cell Struct. Funct.">
        <title>A Drosophila orthologue of larp protein family is required for multiple processes in male meiosis.</title>
        <authorList>
            <person name="Ichihara K."/>
            <person name="Shimizu H."/>
            <person name="Taguchi O."/>
            <person name="Yamaguchi M."/>
            <person name="Inoue Y.H."/>
        </authorList>
    </citation>
    <scope>FUNCTION</scope>
    <scope>DISRUPTION PHENOTYPE</scope>
    <scope>SUBCELLULAR LOCATION</scope>
</reference>
<reference key="8">
    <citation type="journal article" date="2007" name="Mol. Biosyst.">
        <title>An integrated chemical, mass spectrometric and computational strategy for (quantitative) phosphoproteomics: application to Drosophila melanogaster Kc167 cells.</title>
        <authorList>
            <person name="Bodenmiller B."/>
            <person name="Mueller L.N."/>
            <person name="Pedrioli P.G.A."/>
            <person name="Pflieger D."/>
            <person name="Juenger M.A."/>
            <person name="Eng J.K."/>
            <person name="Aebersold R."/>
            <person name="Tao W.A."/>
        </authorList>
    </citation>
    <scope>PHOSPHORYLATION [LARGE SCALE ANALYSIS] AT SER-66; SER-69; SER-562 AND SER-851</scope>
    <scope>IDENTIFICATION BY MASS SPECTROMETRY</scope>
</reference>
<reference key="9">
    <citation type="journal article" date="2008" name="J. Proteome Res.">
        <title>Phosphoproteome analysis of Drosophila melanogaster embryos.</title>
        <authorList>
            <person name="Zhai B."/>
            <person name="Villen J."/>
            <person name="Beausoleil S.A."/>
            <person name="Mintseris J."/>
            <person name="Gygi S.P."/>
        </authorList>
    </citation>
    <scope>PHOSPHORYLATION [LARGE SCALE ANALYSIS] AT SER-69; SER-102; THR-107; SER-111; SER-112; SER-219; SER-221; SER-223; SER-229; SER-230; SER-236; SER-284; SER-608; SER-1119; SER-1124; SER-1261; TYR-1315; SER-1510; SER-1512; SER-1578; SER-1585 AND SER-1610</scope>
    <scope>IDENTIFICATION BY MASS SPECTROMETRY</scope>
    <source>
        <tissue>Embryo</tissue>
    </source>
</reference>
<reference key="10">
    <citation type="journal article" date="2009" name="Dev. Biol.">
        <title>Drosophila Larp associates with poly(A)-binding protein and is required for male fertility and syncytial embryo development.</title>
        <authorList>
            <person name="Blagden S.P."/>
            <person name="Gatt M.K."/>
            <person name="Archambault V."/>
            <person name="Lada K."/>
            <person name="Ichihara K."/>
            <person name="Lilley K.S."/>
            <person name="Inoue Y.H."/>
            <person name="Glover D.M."/>
        </authorList>
    </citation>
    <scope>RNA-BINDING</scope>
    <scope>FUNCTION</scope>
    <scope>DISRUPTION PHENOTYPE</scope>
    <scope>INTERACTION WITH PABP</scope>
</reference>
<reference key="11">
    <citation type="journal article" date="2019" name="Mol. Cell">
        <title>PINK1 Inhibits Local Protein Synthesis to Limit Transmission of Deleterious Mitochondrial DNA Mutations.</title>
        <authorList>
            <person name="Zhang Y."/>
            <person name="Wang Z.H."/>
            <person name="Liu Y."/>
            <person name="Chen Y."/>
            <person name="Sun N."/>
            <person name="Gucek M."/>
            <person name="Zhang F."/>
            <person name="Xu H."/>
        </authorList>
    </citation>
    <scope>FUNCTION</scope>
    <scope>SUBCELLULAR LOCATION</scope>
    <scope>PHOSPHORYLATION AT SER-66; THR-107; SER-182; SER-186; SER-219; SER-221; THR-828; SER-1119; SER-1510 AND SER-1512</scope>
    <scope>MUTAGENESIS OF SER-66; THR-107; SER-182; SER-186; 219-SER--SER-221; THR-828; SER-1119 AND 1510-SER--SER-1512</scope>
</reference>
<reference key="12">
    <citation type="journal article" date="2022" name="Dev. Cell">
        <title>A translation control module coordinates germline stem cell differentiation with ribosome biogenesis during Drosophila oogenesis.</title>
        <authorList>
            <person name="Martin E.T."/>
            <person name="Blatt P."/>
            <person name="Nguyen E."/>
            <person name="Lahr R."/>
            <person name="Selvam S."/>
            <person name="Yoon H.A.M."/>
            <person name="Pocchiari T."/>
            <person name="Emtenani S."/>
            <person name="Siekhaus D.E."/>
            <person name="Berman A."/>
            <person name="Fuchs G."/>
            <person name="Rangan P."/>
        </authorList>
    </citation>
    <scope>FUNCTION</scope>
</reference>
<organism>
    <name type="scientific">Drosophila melanogaster</name>
    <name type="common">Fruit fly</name>
    <dbReference type="NCBI Taxonomy" id="7227"/>
    <lineage>
        <taxon>Eukaryota</taxon>
        <taxon>Metazoa</taxon>
        <taxon>Ecdysozoa</taxon>
        <taxon>Arthropoda</taxon>
        <taxon>Hexapoda</taxon>
        <taxon>Insecta</taxon>
        <taxon>Pterygota</taxon>
        <taxon>Neoptera</taxon>
        <taxon>Endopterygota</taxon>
        <taxon>Diptera</taxon>
        <taxon>Brachycera</taxon>
        <taxon>Muscomorpha</taxon>
        <taxon>Ephydroidea</taxon>
        <taxon>Drosophilidae</taxon>
        <taxon>Drosophila</taxon>
        <taxon>Sophophora</taxon>
    </lineage>
</organism>
<feature type="chain" id="PRO_0000207613" description="La-related protein 1">
    <location>
        <begin position="1"/>
        <end position="1673"/>
    </location>
</feature>
<feature type="domain" description="HTH La-type RNA-binding" evidence="1">
    <location>
        <begin position="723"/>
        <end position="814"/>
    </location>
</feature>
<feature type="region of interest" description="Disordered" evidence="2">
    <location>
        <begin position="35"/>
        <end position="677"/>
    </location>
</feature>
<feature type="region of interest" description="Disordered" evidence="2">
    <location>
        <begin position="833"/>
        <end position="854"/>
    </location>
</feature>
<feature type="region of interest" description="Disordered" evidence="2">
    <location>
        <begin position="928"/>
        <end position="954"/>
    </location>
</feature>
<feature type="region of interest" description="Disordered" evidence="2">
    <location>
        <begin position="975"/>
        <end position="1087"/>
    </location>
</feature>
<feature type="region of interest" description="Disordered" evidence="2">
    <location>
        <begin position="1251"/>
        <end position="1274"/>
    </location>
</feature>
<feature type="region of interest" description="Disordered" evidence="2">
    <location>
        <begin position="1298"/>
        <end position="1318"/>
    </location>
</feature>
<feature type="region of interest" description="Disordered" evidence="2">
    <location>
        <begin position="1542"/>
        <end position="1673"/>
    </location>
</feature>
<feature type="compositionally biased region" description="Low complexity" evidence="2">
    <location>
        <begin position="41"/>
        <end position="54"/>
    </location>
</feature>
<feature type="compositionally biased region" description="Polar residues" evidence="2">
    <location>
        <begin position="60"/>
        <end position="69"/>
    </location>
</feature>
<feature type="compositionally biased region" description="Basic residues" evidence="2">
    <location>
        <begin position="125"/>
        <end position="137"/>
    </location>
</feature>
<feature type="compositionally biased region" description="Low complexity" evidence="2">
    <location>
        <begin position="179"/>
        <end position="208"/>
    </location>
</feature>
<feature type="compositionally biased region" description="Low complexity" evidence="2">
    <location>
        <begin position="239"/>
        <end position="251"/>
    </location>
</feature>
<feature type="compositionally biased region" description="Pro residues" evidence="2">
    <location>
        <begin position="252"/>
        <end position="265"/>
    </location>
</feature>
<feature type="compositionally biased region" description="Low complexity" evidence="2">
    <location>
        <begin position="294"/>
        <end position="392"/>
    </location>
</feature>
<feature type="compositionally biased region" description="Low complexity" evidence="2">
    <location>
        <begin position="437"/>
        <end position="493"/>
    </location>
</feature>
<feature type="compositionally biased region" description="Basic and acidic residues" evidence="2">
    <location>
        <begin position="501"/>
        <end position="510"/>
    </location>
</feature>
<feature type="compositionally biased region" description="Low complexity" evidence="2">
    <location>
        <begin position="512"/>
        <end position="527"/>
    </location>
</feature>
<feature type="compositionally biased region" description="Basic and acidic residues" evidence="2">
    <location>
        <begin position="560"/>
        <end position="579"/>
    </location>
</feature>
<feature type="compositionally biased region" description="Gly residues" evidence="2">
    <location>
        <begin position="632"/>
        <end position="643"/>
    </location>
</feature>
<feature type="compositionally biased region" description="Low complexity" evidence="2">
    <location>
        <begin position="943"/>
        <end position="954"/>
    </location>
</feature>
<feature type="compositionally biased region" description="Low complexity" evidence="2">
    <location>
        <begin position="981"/>
        <end position="1083"/>
    </location>
</feature>
<feature type="compositionally biased region" description="Low complexity" evidence="2">
    <location>
        <begin position="1299"/>
        <end position="1317"/>
    </location>
</feature>
<feature type="compositionally biased region" description="Low complexity" evidence="2">
    <location>
        <begin position="1543"/>
        <end position="1568"/>
    </location>
</feature>
<feature type="compositionally biased region" description="Polar residues" evidence="2">
    <location>
        <begin position="1575"/>
        <end position="1602"/>
    </location>
</feature>
<feature type="compositionally biased region" description="Low complexity" evidence="2">
    <location>
        <begin position="1622"/>
        <end position="1673"/>
    </location>
</feature>
<feature type="modified residue" description="Phosphoserine" evidence="5 9">
    <location>
        <position position="66"/>
    </location>
</feature>
<feature type="modified residue" description="Phosphoserine" evidence="5 7">
    <location>
        <position position="69"/>
    </location>
</feature>
<feature type="modified residue" description="Phosphoserine" evidence="7">
    <location>
        <position position="102"/>
    </location>
</feature>
<feature type="modified residue" description="Phosphothreonine" evidence="7 9">
    <location>
        <position position="107"/>
    </location>
</feature>
<feature type="modified residue" description="Phosphoserine" evidence="7">
    <location>
        <position position="111"/>
    </location>
</feature>
<feature type="modified residue" description="Phosphoserine" evidence="7">
    <location>
        <position position="112"/>
    </location>
</feature>
<feature type="modified residue" description="Phosphoserine" evidence="9">
    <location>
        <position position="182"/>
    </location>
</feature>
<feature type="modified residue" description="Phosphoserine" evidence="9">
    <location>
        <position position="186"/>
    </location>
</feature>
<feature type="modified residue" description="Phosphoserine" evidence="7 9">
    <location>
        <position position="219"/>
    </location>
</feature>
<feature type="modified residue" description="Phosphoserine" evidence="7 9">
    <location>
        <position position="221"/>
    </location>
</feature>
<feature type="modified residue" description="Phosphoserine" evidence="7">
    <location>
        <position position="223"/>
    </location>
</feature>
<feature type="modified residue" description="Phosphoserine" evidence="7">
    <location>
        <position position="229"/>
    </location>
</feature>
<feature type="modified residue" description="Phosphoserine" evidence="7">
    <location>
        <position position="230"/>
    </location>
</feature>
<feature type="modified residue" description="Phosphoserine" evidence="7">
    <location>
        <position position="236"/>
    </location>
</feature>
<feature type="modified residue" description="Phosphoserine" evidence="7">
    <location>
        <position position="284"/>
    </location>
</feature>
<feature type="modified residue" description="Phosphoserine" evidence="5">
    <location>
        <position position="562"/>
    </location>
</feature>
<feature type="modified residue" description="Phosphoserine" evidence="7">
    <location>
        <position position="608"/>
    </location>
</feature>
<feature type="modified residue" description="Phosphothreonine" evidence="9">
    <location>
        <position position="828"/>
    </location>
</feature>
<feature type="modified residue" description="Phosphoserine" evidence="5">
    <location>
        <position position="851"/>
    </location>
</feature>
<feature type="modified residue" description="Phosphoserine" evidence="7 9">
    <location>
        <position position="1119"/>
    </location>
</feature>
<feature type="modified residue" description="Phosphoserine" evidence="7">
    <location>
        <position position="1124"/>
    </location>
</feature>
<feature type="modified residue" description="Phosphoserine" evidence="7">
    <location>
        <position position="1261"/>
    </location>
</feature>
<feature type="modified residue" description="Phosphotyrosine" evidence="7">
    <location>
        <position position="1315"/>
    </location>
</feature>
<feature type="modified residue" description="Phosphoserine" evidence="7 9">
    <location>
        <position position="1510"/>
    </location>
</feature>
<feature type="modified residue" description="Phosphoserine" evidence="7 9">
    <location>
        <position position="1512"/>
    </location>
</feature>
<feature type="modified residue" description="Phosphoserine" evidence="7">
    <location>
        <position position="1578"/>
    </location>
</feature>
<feature type="modified residue" description="Phosphoserine" evidence="7">
    <location>
        <position position="1585"/>
    </location>
</feature>
<feature type="modified residue" description="Phosphoserine" evidence="7">
    <location>
        <position position="1610"/>
    </location>
</feature>
<feature type="splice variant" id="VSP_015117" description="In isoform A." evidence="13">
    <location>
        <begin position="1"/>
        <end position="708"/>
    </location>
</feature>
<feature type="splice variant" id="VSP_041775" description="In isoform C." evidence="11 12">
    <location>
        <begin position="1"/>
        <end position="270"/>
    </location>
</feature>
<feature type="splice variant" id="VSP_041776" description="In isoform C." evidence="11 12">
    <original>I</original>
    <variation>M</variation>
    <location>
        <position position="271"/>
    </location>
</feature>
<feature type="mutagenesis site" description="Partially rescues mtDNA levels and hatching rate in spoon null mutants; when associated with A-107. In larp-10A, loss of phosphorylation by Pink1; when associated with A-107; A-182; A-186; 219-A-A-221; A-828; A-1119 and 1510-A-A-1512." evidence="9">
    <original>S</original>
    <variation>A</variation>
    <location>
        <position position="66"/>
    </location>
</feature>
<feature type="mutagenesis site" description="Phosphomimetic mutant, partially rescues mtDNA levels and hatching rate in spoon null mutants; when associated with D-107." evidence="9">
    <original>S</original>
    <variation>D</variation>
    <location>
        <position position="66"/>
    </location>
</feature>
<feature type="mutagenesis site" description="Partially rescues mtDNA levels and hatching rate in spoon null mutants; when associated with A-66. In larp-10A, loss of phosphorylation by Pink1; when associated with A-66; A-182; A-186; 219-A-A-221; A-828; A-1119 and 1510-A-A-1512." evidence="9">
    <original>T</original>
    <variation>A</variation>
    <location>
        <position position="107"/>
    </location>
</feature>
<feature type="mutagenesis site" description="Phosphomimetic mutant, partially rescues mtDNA levels and hatching rate in spoon null mutants; when associated with D-66." evidence="9">
    <original>T</original>
    <variation>D</variation>
    <location>
        <position position="107"/>
    </location>
</feature>
<feature type="mutagenesis site" description="Partially rescues mtDNA levels and hatching rate in spoon null mutants; when associated with A-186. In larp-10A, loss of phosphorylation by Pink1; when associated with A-66; A-107; A-186; 219-A-A-221; A-828; A-1119 and 1510-A-A-1512." evidence="9">
    <original>S</original>
    <variation>A</variation>
    <location>
        <position position="182"/>
    </location>
</feature>
<feature type="mutagenesis site" description="Phosphomimetic mutant, partially rescues mtDNA levels and hatching rate in spoon null mutants; when associated with D-186." evidence="9">
    <original>S</original>
    <variation>D</variation>
    <location>
        <position position="182"/>
    </location>
</feature>
<feature type="mutagenesis site" description="Partially rescues mtDNA levels and hatching rate in spoon null mutants; when associated with A-182. In larp-10A, loss of phosphorylation by Pink1; when associated with A-66; A-107; A-182; 219-A-A-221; A-828; A-1119 and 1510-A-A-1512." evidence="9">
    <original>S</original>
    <variation>A</variation>
    <location>
        <position position="186"/>
    </location>
</feature>
<feature type="mutagenesis site" description="Phosphomimetic mutant, partially rescues mtDNA levels and hatching rate in spoon null mutants; when associated with D-182." evidence="9">
    <original>S</original>
    <variation>D</variation>
    <location>
        <position position="186"/>
    </location>
</feature>
<feature type="mutagenesis site" description="Partially rescues mtDNA levels and hatching rate in spoon null mutants. In larp-10A, loss of phosphorylation by Pink1; when associated with A-66; A-107; A-182; A-186; A-828; A-1119 and 1510-A-A-1512." evidence="9">
    <original>SPS</original>
    <variation>APA</variation>
    <location>
        <begin position="219"/>
        <end position="221"/>
    </location>
</feature>
<feature type="mutagenesis site" description="Partially rescues mtDNA levels and hatching rate in spoon null mutants. In larp-10A, loss of phosphorylation by Pink1; when associated with A-66; A-107; A-182; A-186; 219-A-A-221; A-1119 and 1510-A-A-1512." evidence="9">
    <original>T</original>
    <variation>A</variation>
    <location>
        <position position="828"/>
    </location>
</feature>
<feature type="mutagenesis site" description="Phosphomimetic mutant, partially rescues mtDNA levels and hatching rate in spoon null mutants." evidence="9">
    <original>T</original>
    <variation>D</variation>
    <location>
        <position position="828"/>
    </location>
</feature>
<feature type="mutagenesis site" description="Partially rescues nascent protein synthesis and PolG1 expression in mitochondria containing deleterious mutations. Partially rescues mtDNA levels and hatching rate in spoon null mutants. In larp-10A, loss of phosphorylation by Pink1; when associated with A-66; A-107; A-182; A-186; 219-A-A-221; A-828 and 1510-A-A-1512." evidence="9">
    <original>S</original>
    <variation>A</variation>
    <location>
        <position position="1119"/>
    </location>
</feature>
<feature type="mutagenesis site" description="Phosphomimetic mutant, severe reduction in ability to rescue mtDNA levels and hatching rate in spoon null mutants." evidence="9">
    <original>S</original>
    <variation>D</variation>
    <location>
        <position position="1119"/>
    </location>
</feature>
<feature type="mutagenesis site" description="Partially rescues mtDNA levels and hatching rate in spoon null mutants. In larp-10A, loss of phosphorylation by Pink1; when associated with A-66; A-107; A-182; A-186; 219-A-A-221; A-828 and A-1119." evidence="9">
    <original>SVS</original>
    <variation>AVA</variation>
    <location>
        <begin position="1510"/>
        <end position="1512"/>
    </location>
</feature>
<feature type="mutagenesis site" description="Phosphomimetic mutant, partially rescues mtDNA levels and hatching rate in spoon null mutants." evidence="9">
    <original>SVS</original>
    <variation>DVD</variation>
    <location>
        <begin position="1510"/>
        <end position="1512"/>
    </location>
</feature>
<feature type="sequence conflict" description="In Ref. 5; ACY39986." evidence="13" ref="5">
    <original>A</original>
    <variation>V</variation>
    <location>
        <position position="21"/>
    </location>
</feature>
<feature type="sequence conflict" description="In Ref. 5; ACY39986." evidence="13" ref="5">
    <original>G</original>
    <variation>D</variation>
    <location>
        <position position="42"/>
    </location>
</feature>
<feature type="sequence conflict" description="In Ref. 5; ACY39986." evidence="13" ref="5">
    <original>V</original>
    <variation>A</variation>
    <location>
        <position position="205"/>
    </location>
</feature>
<feature type="sequence conflict" description="In Ref. 5; ACY39986." evidence="13" ref="5">
    <original>A</original>
    <variation>T</variation>
    <location>
        <position position="248"/>
    </location>
</feature>
<feature type="sequence conflict" description="In Ref. 5; ACY39986." evidence="13" ref="5">
    <original>A</original>
    <variation>V</variation>
    <location>
        <position position="348"/>
    </location>
</feature>
<feature type="sequence conflict" description="In Ref. 5; ACY39986." evidence="13" ref="5">
    <original>AT</original>
    <variation>TA</variation>
    <location>
        <begin position="351"/>
        <end position="352"/>
    </location>
</feature>
<feature type="sequence conflict" description="In Ref. 5; ACY39986." evidence="13" ref="5">
    <original>TT</original>
    <variation>KA</variation>
    <location>
        <begin position="355"/>
        <end position="356"/>
    </location>
</feature>
<feature type="sequence conflict" description="In Ref. 4; AAM29658." evidence="13" ref="4">
    <original>P</original>
    <variation>A</variation>
    <location>
        <position position="369"/>
    </location>
</feature>
<feature type="sequence conflict" description="In Ref. 1; AAF35862." evidence="13" ref="1">
    <original>P</original>
    <variation>S</variation>
    <location>
        <position position="476"/>
    </location>
</feature>
<feature type="sequence conflict" description="In Ref. 1; AAF35862." evidence="13" ref="1">
    <original>S</original>
    <variation>R</variation>
    <location>
        <position position="489"/>
    </location>
</feature>
<feature type="sequence conflict" description="In Ref. 4; AAM29658." evidence="13" ref="4">
    <original>A</original>
    <variation>E</variation>
    <location>
        <position position="512"/>
    </location>
</feature>
<feature type="sequence conflict" description="In Ref. 4; AAM29658." evidence="13" ref="4">
    <original>T</original>
    <variation>A</variation>
    <location>
        <position position="641"/>
    </location>
</feature>
<feature type="sequence conflict" description="In Ref. 4; AAM29658." evidence="13" ref="4">
    <original>S</original>
    <variation>T</variation>
    <location>
        <position position="668"/>
    </location>
</feature>
<feature type="sequence conflict" description="In Ref. 4; AAM29658." evidence="13" ref="4">
    <original>Y</original>
    <variation>H</variation>
    <location>
        <position position="677"/>
    </location>
</feature>
<feature type="sequence conflict" description="In Ref. 1; AAF35862 and 4; AAM29658." evidence="13" ref="1 4">
    <original>N</original>
    <variation>T</variation>
    <location>
        <position position="819"/>
    </location>
</feature>
<feature type="sequence conflict" description="In Ref. 1; AAF35862." evidence="13" ref="1">
    <original>L</original>
    <variation>V</variation>
    <location>
        <position position="1100"/>
    </location>
</feature>
<feature type="sequence conflict" description="In Ref. 1; AAF35862 and 4; AAM49837." evidence="13" ref="1 4">
    <original>T</original>
    <variation>A</variation>
    <location>
        <position position="1648"/>
    </location>
</feature>
<feature type="helix" evidence="14">
    <location>
        <begin position="1332"/>
        <end position="1335"/>
    </location>
</feature>
<feature type="turn" evidence="14">
    <location>
        <begin position="1339"/>
        <end position="1341"/>
    </location>
</feature>
<feature type="helix" evidence="14">
    <location>
        <begin position="1344"/>
        <end position="1361"/>
    </location>
</feature>
<feature type="helix" evidence="14">
    <location>
        <begin position="1367"/>
        <end position="1382"/>
    </location>
</feature>
<feature type="helix" evidence="14">
    <location>
        <begin position="1386"/>
        <end position="1400"/>
    </location>
</feature>
<feature type="turn" evidence="14">
    <location>
        <begin position="1401"/>
        <end position="1403"/>
    </location>
</feature>
<feature type="helix" evidence="14">
    <location>
        <begin position="1406"/>
        <end position="1421"/>
    </location>
</feature>
<feature type="helix" evidence="14">
    <location>
        <begin position="1425"/>
        <end position="1440"/>
    </location>
</feature>
<feature type="helix" evidence="14">
    <location>
        <begin position="1445"/>
        <end position="1456"/>
    </location>
</feature>
<feature type="helix" evidence="14">
    <location>
        <begin position="1460"/>
        <end position="1462"/>
    </location>
</feature>
<feature type="helix" evidence="14">
    <location>
        <begin position="1467"/>
        <end position="1475"/>
    </location>
</feature>
<feature type="helix" evidence="14">
    <location>
        <begin position="1476"/>
        <end position="1478"/>
    </location>
</feature>
<sequence>MSSKEETPSTGGAAPVATVAASGSATTSYANVVQNLETKKSGTSNTTTTTARATVDNKENQPNLKSFKSWSEEAAAAEAAGESPIVGSVSLAQTGEKRAAASGGDNTAENSSELDDNNDFVPVLSHHRRDRKKARKEKPRDQQPAGGRGDGQKPQQAGGRRVPGSSDTERKSVRPRAPRGGSPRKSAAGAAGAAGSNAGAVSSAVPGGPKVHKDRKDTSPSASIEGAGSSGNEAKSADGDQQAGEKGAAGAAPPPKRFIAAPPPKVNAWKISAKQSGSPKAGTSPLDKRVLQPKAQQQQQQTKQTASQNNNAQNTASNKKTQQQQQPQQGATTTTQTTTAAAAAATAAAAATAATTSAAAATSSAAAVPAATTETATTTTVDASQADALAKVVVKDKKKVNQKASDFSNVGDWPTLIGGTSGSGKATSNEPKRNPTKKQQSAKTAAAVAASSNTTSSEVATESNVAGTTSSSNSNPSSSTTTTNTTTNSQATTAPVASTSHDAKAQRDAEPAANSAAGTTGTAAGPALTKKIPKHKWRPLPIDLAKSSRPKPIGGRPNRRFSDDIADQRRPPRVYHDRQPGAGGAGVESRHPHAGRHPYGSRPATATSERVDSWRSSSSTTTAAFDEQRSGAAGGAGAAGTGVGSATRGPRRYRTPYRGGRQGRGGFSRQGPGRPTYRIPRHLLASGEYANYLPADAAGADSQSSYVLMGTHYFGNVPAAYIELDANSIKEAIKKQVEYYFSVDNLTGDFFLRRKMDPEGYIPVTLIASFHRVLALTTDVAVIVNAIKESDKLELFEGYKVRTKTTPTTWPITEVPEVNEGEPKAIGTLEQEQLEQNDGQEKLEEQTEADSPPPILTSAMATKPLNSIPPPPMPRNPQNLVPKMLQDKQQSRSSTIAALNSVNAISALTQQVEGGAAELAGHLSGLAESVKPKSTSTPDKRNAASAGNGAGSAAALVAEPEGIWKEVKRRSKTNAIKENATTPPQQQQPPLSQTLNNNNDNVKTNNTSSKSKSSSNNAPSNASSSATVCVTTNNASSATKATTKTTTTSTATTTTNNNIKSGNAAYSKTHSKSSSKTAAPPSAQCHAEKEELDFQFDEELMDPLPPGTGRINNFTENFSDDDESDYEFADRDINKLLIVAQVGRAPKHEGYDRTADFTSRTKITQDLENIINDGLVNYEEDLWTTTNVVADYKTVNVISQADFEKLAGGRNKSVLPPQVVPPPPPFEEDLDETLVGDTTLNSTLNNTLKSRRARFYAAPNSHSIDPRTPRKRKLRHTANPPVEAHVGWLLDTVEHRPRTTSMGSSAGTSPTASSYGSFGSSVPQSLPVFQHPSHALLKENNFTQQAYHKYHSRCLKERRRLGYGQSQEMNTLYRFWSFFLRENFNKSMYNEFRSLALEDAGNGFRYGLECLFRFFSYGLEKKFRPNIYQDFQDETIADYETGQLYGLEKFWAFLKYYKNGEKLEVQPKLAEYLKSFKNIEDFRVVEPEINEMLQGVGSLNPGRQLNRHRSVSESDGTAVIAAGGRRLNTTITNRSDYVGRLLQQQHQQQQQQQHHQYQQGYGGYNQQQNRRRTGSFGSTTVRIRSGSLGNKPQVANRNQGSQHELRRGGSNSGLAPHKRQQQQKPKPGAGSQTGSTRATTSAAATATTAASAATSTAATPAVTVSSGSSSSKK</sequence>
<name>LARP_DROME</name>